<comment type="function">
    <text evidence="1">Part of the ABC transporter complex PstSACB involved in phosphate import. Responsible for energy coupling to the transport system.</text>
</comment>
<comment type="catalytic activity">
    <reaction evidence="1">
        <text>phosphate(out) + ATP + H2O = ADP + 2 phosphate(in) + H(+)</text>
        <dbReference type="Rhea" id="RHEA:24440"/>
        <dbReference type="ChEBI" id="CHEBI:15377"/>
        <dbReference type="ChEBI" id="CHEBI:15378"/>
        <dbReference type="ChEBI" id="CHEBI:30616"/>
        <dbReference type="ChEBI" id="CHEBI:43474"/>
        <dbReference type="ChEBI" id="CHEBI:456216"/>
        <dbReference type="EC" id="7.3.2.1"/>
    </reaction>
</comment>
<comment type="subunit">
    <text evidence="1">The complex is composed of two ATP-binding proteins (PstB), two transmembrane proteins (PstC and PstA) and a solute-binding protein (PstS).</text>
</comment>
<comment type="subcellular location">
    <subcellularLocation>
        <location evidence="1">Cell membrane</location>
        <topology evidence="1">Peripheral membrane protein</topology>
    </subcellularLocation>
</comment>
<comment type="similarity">
    <text evidence="1">Belongs to the ABC transporter superfamily. Phosphate importer (TC 3.A.1.7) family.</text>
</comment>
<name>PSTB2_STRPD</name>
<accession>Q1JGL2</accession>
<protein>
    <recommendedName>
        <fullName evidence="1">Phosphate import ATP-binding protein PstB 2</fullName>
        <ecNumber evidence="1">7.3.2.1</ecNumber>
    </recommendedName>
    <alternativeName>
        <fullName evidence="1">ABC phosphate transporter 2</fullName>
    </alternativeName>
    <alternativeName>
        <fullName evidence="1">Phosphate-transporting ATPase 2</fullName>
    </alternativeName>
</protein>
<feature type="chain" id="PRO_0000272546" description="Phosphate import ATP-binding protein PstB 2">
    <location>
        <begin position="1"/>
        <end position="267"/>
    </location>
</feature>
<feature type="domain" description="ABC transporter" evidence="1">
    <location>
        <begin position="21"/>
        <end position="262"/>
    </location>
</feature>
<feature type="binding site" evidence="1">
    <location>
        <begin position="53"/>
        <end position="60"/>
    </location>
    <ligand>
        <name>ATP</name>
        <dbReference type="ChEBI" id="CHEBI:30616"/>
    </ligand>
</feature>
<keyword id="KW-0067">ATP-binding</keyword>
<keyword id="KW-1003">Cell membrane</keyword>
<keyword id="KW-0472">Membrane</keyword>
<keyword id="KW-0547">Nucleotide-binding</keyword>
<keyword id="KW-0592">Phosphate transport</keyword>
<keyword id="KW-1278">Translocase</keyword>
<keyword id="KW-0813">Transport</keyword>
<sequence length="267" mass="30482">MTEYNWNERHIITFPEETLALATKDLHVYYGAKEAIKGIDMQFEKHKITALIGPSGCGKSTYLRSLNRMNDTIDIARVTGEILYQGIDVNRKDMNVYEIRKHLGMVFQRPNPFAKSIYKNITFAHERAGVKDKKVLDEIVETSLKQAALWDQVKDDLHKSAFTLSGGQQQRLCIARAISVKPDILLMDEPASALDPIATMQLEETMFELKKNYTIIIVTHNMQQAARASDYTAFFYLGNLIEYDKTRNIFQNAQCQSTNDYVSGHFG</sequence>
<proteinExistence type="inferred from homology"/>
<organism>
    <name type="scientific">Streptococcus pyogenes serotype M2 (strain MGAS10270)</name>
    <dbReference type="NCBI Taxonomy" id="370552"/>
    <lineage>
        <taxon>Bacteria</taxon>
        <taxon>Bacillati</taxon>
        <taxon>Bacillota</taxon>
        <taxon>Bacilli</taxon>
        <taxon>Lactobacillales</taxon>
        <taxon>Streptococcaceae</taxon>
        <taxon>Streptococcus</taxon>
    </lineage>
</organism>
<gene>
    <name evidence="1" type="primary">pstB2</name>
    <name type="ordered locus">MGAS10270_Spy1067</name>
</gene>
<dbReference type="EC" id="7.3.2.1" evidence="1"/>
<dbReference type="EMBL" id="CP000260">
    <property type="protein sequence ID" value="ABF34132.1"/>
    <property type="molecule type" value="Genomic_DNA"/>
</dbReference>
<dbReference type="SMR" id="Q1JGL2"/>
<dbReference type="KEGG" id="sph:MGAS10270_Spy1067"/>
<dbReference type="HOGENOM" id="CLU_000604_1_22_9"/>
<dbReference type="Proteomes" id="UP000002436">
    <property type="component" value="Chromosome"/>
</dbReference>
<dbReference type="GO" id="GO:0005886">
    <property type="term" value="C:plasma membrane"/>
    <property type="evidence" value="ECO:0007669"/>
    <property type="project" value="UniProtKB-SubCell"/>
</dbReference>
<dbReference type="GO" id="GO:0005524">
    <property type="term" value="F:ATP binding"/>
    <property type="evidence" value="ECO:0007669"/>
    <property type="project" value="UniProtKB-KW"/>
</dbReference>
<dbReference type="GO" id="GO:0016887">
    <property type="term" value="F:ATP hydrolysis activity"/>
    <property type="evidence" value="ECO:0007669"/>
    <property type="project" value="InterPro"/>
</dbReference>
<dbReference type="GO" id="GO:0015415">
    <property type="term" value="F:ATPase-coupled phosphate ion transmembrane transporter activity"/>
    <property type="evidence" value="ECO:0007669"/>
    <property type="project" value="UniProtKB-EC"/>
</dbReference>
<dbReference type="GO" id="GO:0035435">
    <property type="term" value="P:phosphate ion transmembrane transport"/>
    <property type="evidence" value="ECO:0007669"/>
    <property type="project" value="InterPro"/>
</dbReference>
<dbReference type="CDD" id="cd03260">
    <property type="entry name" value="ABC_PstB_phosphate_transporter"/>
    <property type="match status" value="1"/>
</dbReference>
<dbReference type="Gene3D" id="3.40.50.300">
    <property type="entry name" value="P-loop containing nucleotide triphosphate hydrolases"/>
    <property type="match status" value="1"/>
</dbReference>
<dbReference type="InterPro" id="IPR003593">
    <property type="entry name" value="AAA+_ATPase"/>
</dbReference>
<dbReference type="InterPro" id="IPR003439">
    <property type="entry name" value="ABC_transporter-like_ATP-bd"/>
</dbReference>
<dbReference type="InterPro" id="IPR017871">
    <property type="entry name" value="ABC_transporter-like_CS"/>
</dbReference>
<dbReference type="InterPro" id="IPR027417">
    <property type="entry name" value="P-loop_NTPase"/>
</dbReference>
<dbReference type="InterPro" id="IPR005670">
    <property type="entry name" value="PstB-like"/>
</dbReference>
<dbReference type="NCBIfam" id="TIGR00972">
    <property type="entry name" value="3a0107s01c2"/>
    <property type="match status" value="1"/>
</dbReference>
<dbReference type="PANTHER" id="PTHR43423">
    <property type="entry name" value="ABC TRANSPORTER I FAMILY MEMBER 17"/>
    <property type="match status" value="1"/>
</dbReference>
<dbReference type="PANTHER" id="PTHR43423:SF10">
    <property type="entry name" value="PHOSPHATE IMPORT ATP-BINDING PROTEIN PSTB 2"/>
    <property type="match status" value="1"/>
</dbReference>
<dbReference type="Pfam" id="PF00005">
    <property type="entry name" value="ABC_tran"/>
    <property type="match status" value="1"/>
</dbReference>
<dbReference type="SMART" id="SM00382">
    <property type="entry name" value="AAA"/>
    <property type="match status" value="1"/>
</dbReference>
<dbReference type="SUPFAM" id="SSF52540">
    <property type="entry name" value="P-loop containing nucleoside triphosphate hydrolases"/>
    <property type="match status" value="1"/>
</dbReference>
<dbReference type="PROSITE" id="PS00211">
    <property type="entry name" value="ABC_TRANSPORTER_1"/>
    <property type="match status" value="1"/>
</dbReference>
<dbReference type="PROSITE" id="PS50893">
    <property type="entry name" value="ABC_TRANSPORTER_2"/>
    <property type="match status" value="1"/>
</dbReference>
<dbReference type="PROSITE" id="PS51238">
    <property type="entry name" value="PSTB"/>
    <property type="match status" value="1"/>
</dbReference>
<evidence type="ECO:0000255" key="1">
    <source>
        <dbReference type="HAMAP-Rule" id="MF_01702"/>
    </source>
</evidence>
<reference key="1">
    <citation type="journal article" date="2006" name="Proc. Natl. Acad. Sci. U.S.A.">
        <title>Molecular genetic anatomy of inter- and intraserotype variation in the human bacterial pathogen group A Streptococcus.</title>
        <authorList>
            <person name="Beres S.B."/>
            <person name="Richter E.W."/>
            <person name="Nagiec M.J."/>
            <person name="Sumby P."/>
            <person name="Porcella S.F."/>
            <person name="DeLeo F.R."/>
            <person name="Musser J.M."/>
        </authorList>
    </citation>
    <scope>NUCLEOTIDE SEQUENCE [LARGE SCALE GENOMIC DNA]</scope>
    <source>
        <strain>MGAS10270</strain>
    </source>
</reference>